<organism>
    <name type="scientific">Arabidopsis thaliana</name>
    <name type="common">Mouse-ear cress</name>
    <dbReference type="NCBI Taxonomy" id="3702"/>
    <lineage>
        <taxon>Eukaryota</taxon>
        <taxon>Viridiplantae</taxon>
        <taxon>Streptophyta</taxon>
        <taxon>Embryophyta</taxon>
        <taxon>Tracheophyta</taxon>
        <taxon>Spermatophyta</taxon>
        <taxon>Magnoliopsida</taxon>
        <taxon>eudicotyledons</taxon>
        <taxon>Gunneridae</taxon>
        <taxon>Pentapetalae</taxon>
        <taxon>rosids</taxon>
        <taxon>malvids</taxon>
        <taxon>Brassicales</taxon>
        <taxon>Brassicaceae</taxon>
        <taxon>Camelineae</taxon>
        <taxon>Arabidopsis</taxon>
    </lineage>
</organism>
<dbReference type="EC" id="3.2.1.4"/>
<dbReference type="EMBL" id="AF075597">
    <property type="protein sequence ID" value="AAC28173.1"/>
    <property type="molecule type" value="Genomic_DNA"/>
</dbReference>
<dbReference type="EMBL" id="AL161494">
    <property type="protein sequence ID" value="CAB80722.1"/>
    <property type="molecule type" value="Genomic_DNA"/>
</dbReference>
<dbReference type="EMBL" id="CP002687">
    <property type="protein sequence ID" value="AEE82151.1"/>
    <property type="molecule type" value="Genomic_DNA"/>
</dbReference>
<dbReference type="EMBL" id="AY101518">
    <property type="protein sequence ID" value="AAM26639.1"/>
    <property type="molecule type" value="mRNA"/>
</dbReference>
<dbReference type="EMBL" id="AY079162">
    <property type="protein sequence ID" value="AAL85001.1"/>
    <property type="molecule type" value="mRNA"/>
</dbReference>
<dbReference type="PIR" id="T01419">
    <property type="entry name" value="T01419"/>
</dbReference>
<dbReference type="SMR" id="O81416"/>
<dbReference type="FunCoup" id="O81416">
    <property type="interactions" value="235"/>
</dbReference>
<dbReference type="IntAct" id="O81416">
    <property type="interactions" value="1"/>
</dbReference>
<dbReference type="STRING" id="3702.O81416"/>
<dbReference type="CAZy" id="GH9">
    <property type="family name" value="Glycoside Hydrolase Family 9"/>
</dbReference>
<dbReference type="iPTMnet" id="O81416"/>
<dbReference type="PaxDb" id="3702-AT4G02290.1"/>
<dbReference type="ProteomicsDB" id="247267"/>
<dbReference type="EnsemblPlants" id="AT4G02290.1">
    <property type="protein sequence ID" value="AT4G02290.1"/>
    <property type="gene ID" value="AT4G02290"/>
</dbReference>
<dbReference type="GeneID" id="828080"/>
<dbReference type="Gramene" id="AT4G02290.1">
    <property type="protein sequence ID" value="AT4G02290.1"/>
    <property type="gene ID" value="AT4G02290"/>
</dbReference>
<dbReference type="KEGG" id="ath:AT4G02290"/>
<dbReference type="Araport" id="AT4G02290"/>
<dbReference type="TAIR" id="AT4G02290">
    <property type="gene designation" value="GH9B13"/>
</dbReference>
<dbReference type="eggNOG" id="ENOG502QPI6">
    <property type="taxonomic scope" value="Eukaryota"/>
</dbReference>
<dbReference type="HOGENOM" id="CLU_008926_1_2_1"/>
<dbReference type="InParanoid" id="O81416"/>
<dbReference type="OMA" id="NWDSKTP"/>
<dbReference type="PhylomeDB" id="O81416"/>
<dbReference type="BioCyc" id="ARA:AT4G02290-MONOMER"/>
<dbReference type="CD-CODE" id="4299E36E">
    <property type="entry name" value="Nucleolus"/>
</dbReference>
<dbReference type="PRO" id="PR:O81416"/>
<dbReference type="Proteomes" id="UP000006548">
    <property type="component" value="Chromosome 4"/>
</dbReference>
<dbReference type="ExpressionAtlas" id="O81416">
    <property type="expression patterns" value="baseline and differential"/>
</dbReference>
<dbReference type="GO" id="GO:0005576">
    <property type="term" value="C:extracellular region"/>
    <property type="evidence" value="ECO:0007669"/>
    <property type="project" value="UniProtKB-SubCell"/>
</dbReference>
<dbReference type="GO" id="GO:0008810">
    <property type="term" value="F:cellulase activity"/>
    <property type="evidence" value="ECO:0007669"/>
    <property type="project" value="UniProtKB-EC"/>
</dbReference>
<dbReference type="GO" id="GO:0071555">
    <property type="term" value="P:cell wall organization"/>
    <property type="evidence" value="ECO:0007669"/>
    <property type="project" value="UniProtKB-KW"/>
</dbReference>
<dbReference type="GO" id="GO:0030245">
    <property type="term" value="P:cellulose catabolic process"/>
    <property type="evidence" value="ECO:0007669"/>
    <property type="project" value="UniProtKB-KW"/>
</dbReference>
<dbReference type="FunFam" id="1.50.10.10:FF:000020">
    <property type="entry name" value="Endoglucanase"/>
    <property type="match status" value="1"/>
</dbReference>
<dbReference type="Gene3D" id="1.50.10.10">
    <property type="match status" value="1"/>
</dbReference>
<dbReference type="InterPro" id="IPR008928">
    <property type="entry name" value="6-hairpin_glycosidase_sf"/>
</dbReference>
<dbReference type="InterPro" id="IPR012341">
    <property type="entry name" value="6hp_glycosidase-like_sf"/>
</dbReference>
<dbReference type="InterPro" id="IPR001701">
    <property type="entry name" value="Glyco_hydro_9"/>
</dbReference>
<dbReference type="InterPro" id="IPR033126">
    <property type="entry name" value="Glyco_hydro_9_Asp/Glu_AS"/>
</dbReference>
<dbReference type="InterPro" id="IPR018221">
    <property type="entry name" value="Glyco_hydro_9_His_AS"/>
</dbReference>
<dbReference type="PANTHER" id="PTHR22298">
    <property type="entry name" value="ENDO-1,4-BETA-GLUCANASE"/>
    <property type="match status" value="1"/>
</dbReference>
<dbReference type="Pfam" id="PF00759">
    <property type="entry name" value="Glyco_hydro_9"/>
    <property type="match status" value="1"/>
</dbReference>
<dbReference type="SUPFAM" id="SSF48208">
    <property type="entry name" value="Six-hairpin glycosidases"/>
    <property type="match status" value="1"/>
</dbReference>
<dbReference type="PROSITE" id="PS60032">
    <property type="entry name" value="GH9_1"/>
    <property type="match status" value="1"/>
</dbReference>
<dbReference type="PROSITE" id="PS00592">
    <property type="entry name" value="GH9_2"/>
    <property type="match status" value="1"/>
</dbReference>
<dbReference type="PROSITE" id="PS00698">
    <property type="entry name" value="GH9_3"/>
    <property type="match status" value="1"/>
</dbReference>
<sequence length="516" mass="57301">MALLLVSSSSSYALRVTIFLSFFFFLCNGFSYPTTSSLFNTHHHRHHLAKHNYKDALTKSILFFEGQRSGKLPSNQRMSWRRDSGLSDGSALHVDLVGGYYDAGDNIKFGFPMAFTTTMLSWSVIEFGGLMKSELQNAKIAIRWATDYLLKATSQPDTIYVQVGDANKDHSCWERPEDMDTVRSVFKVDKNIPGSDVAAETAAALAAAAIVFRKSDPSYSKVLLKRAISVFAFADKYRGTYSAGLKPDVCPFYCSYSGYQDELLWGAAWLQKATKNIKYLNYIKINGQILGAAEYDNTFGWDNKHAGARILLTKAFLVQNVKTLHEYKGHADNFICSVIPGAPFSSTQYTPGGLLFKMADANMQYVTSTSFLLLTYAKYLTSAKTVVHCGGSVYTPGRLRSIAKRQVDYLLGDNPLRMSYMVGYGPKFPRRIHHRGSSLPCVASHPAKIQCHQGFAIMNSQSPNPNFLVGAVVGGPDQHDRFPDERSDYEQSEPATYINSPLVGALAYFAHAYGQL</sequence>
<comment type="catalytic activity">
    <reaction>
        <text>Endohydrolysis of (1-&gt;4)-beta-D-glucosidic linkages in cellulose, lichenin and cereal beta-D-glucans.</text>
        <dbReference type="EC" id="3.2.1.4"/>
    </reaction>
</comment>
<comment type="subcellular location">
    <subcellularLocation>
        <location evidence="1">Secreted</location>
    </subcellularLocation>
</comment>
<comment type="similarity">
    <text evidence="5 6">Belongs to the glycosyl hydrolase 9 (cellulase E) family.</text>
</comment>
<reference key="1">
    <citation type="journal article" date="1999" name="Nature">
        <title>Sequence and analysis of chromosome 4 of the plant Arabidopsis thaliana.</title>
        <authorList>
            <person name="Mayer K.F.X."/>
            <person name="Schueller C."/>
            <person name="Wambutt R."/>
            <person name="Murphy G."/>
            <person name="Volckaert G."/>
            <person name="Pohl T."/>
            <person name="Duesterhoeft A."/>
            <person name="Stiekema W."/>
            <person name="Entian K.-D."/>
            <person name="Terryn N."/>
            <person name="Harris B."/>
            <person name="Ansorge W."/>
            <person name="Brandt P."/>
            <person name="Grivell L.A."/>
            <person name="Rieger M."/>
            <person name="Weichselgartner M."/>
            <person name="de Simone V."/>
            <person name="Obermaier B."/>
            <person name="Mache R."/>
            <person name="Mueller M."/>
            <person name="Kreis M."/>
            <person name="Delseny M."/>
            <person name="Puigdomenech P."/>
            <person name="Watson M."/>
            <person name="Schmidtheini T."/>
            <person name="Reichert B."/>
            <person name="Portetelle D."/>
            <person name="Perez-Alonso M."/>
            <person name="Boutry M."/>
            <person name="Bancroft I."/>
            <person name="Vos P."/>
            <person name="Hoheisel J."/>
            <person name="Zimmermann W."/>
            <person name="Wedler H."/>
            <person name="Ridley P."/>
            <person name="Langham S.-A."/>
            <person name="McCullagh B."/>
            <person name="Bilham L."/>
            <person name="Robben J."/>
            <person name="van der Schueren J."/>
            <person name="Grymonprez B."/>
            <person name="Chuang Y.-J."/>
            <person name="Vandenbussche F."/>
            <person name="Braeken M."/>
            <person name="Weltjens I."/>
            <person name="Voet M."/>
            <person name="Bastiaens I."/>
            <person name="Aert R."/>
            <person name="Defoor E."/>
            <person name="Weitzenegger T."/>
            <person name="Bothe G."/>
            <person name="Ramsperger U."/>
            <person name="Hilbert H."/>
            <person name="Braun M."/>
            <person name="Holzer E."/>
            <person name="Brandt A."/>
            <person name="Peters S."/>
            <person name="van Staveren M."/>
            <person name="Dirkse W."/>
            <person name="Mooijman P."/>
            <person name="Klein Lankhorst R."/>
            <person name="Rose M."/>
            <person name="Hauf J."/>
            <person name="Koetter P."/>
            <person name="Berneiser S."/>
            <person name="Hempel S."/>
            <person name="Feldpausch M."/>
            <person name="Lamberth S."/>
            <person name="Van den Daele H."/>
            <person name="De Keyser A."/>
            <person name="Buysshaert C."/>
            <person name="Gielen J."/>
            <person name="Villarroel R."/>
            <person name="De Clercq R."/>
            <person name="van Montagu M."/>
            <person name="Rogers J."/>
            <person name="Cronin A."/>
            <person name="Quail M.A."/>
            <person name="Bray-Allen S."/>
            <person name="Clark L."/>
            <person name="Doggett J."/>
            <person name="Hall S."/>
            <person name="Kay M."/>
            <person name="Lennard N."/>
            <person name="McLay K."/>
            <person name="Mayes R."/>
            <person name="Pettett A."/>
            <person name="Rajandream M.A."/>
            <person name="Lyne M."/>
            <person name="Benes V."/>
            <person name="Rechmann S."/>
            <person name="Borkova D."/>
            <person name="Bloecker H."/>
            <person name="Scharfe M."/>
            <person name="Grimm M."/>
            <person name="Loehnert T.-H."/>
            <person name="Dose S."/>
            <person name="de Haan M."/>
            <person name="Maarse A.C."/>
            <person name="Schaefer M."/>
            <person name="Mueller-Auer S."/>
            <person name="Gabel C."/>
            <person name="Fuchs M."/>
            <person name="Fartmann B."/>
            <person name="Granderath K."/>
            <person name="Dauner D."/>
            <person name="Herzl A."/>
            <person name="Neumann S."/>
            <person name="Argiriou A."/>
            <person name="Vitale D."/>
            <person name="Liguori R."/>
            <person name="Piravandi E."/>
            <person name="Massenet O."/>
            <person name="Quigley F."/>
            <person name="Clabauld G."/>
            <person name="Muendlein A."/>
            <person name="Felber R."/>
            <person name="Schnabl S."/>
            <person name="Hiller R."/>
            <person name="Schmidt W."/>
            <person name="Lecharny A."/>
            <person name="Aubourg S."/>
            <person name="Chefdor F."/>
            <person name="Cooke R."/>
            <person name="Berger C."/>
            <person name="Monfort A."/>
            <person name="Casacuberta E."/>
            <person name="Gibbons T."/>
            <person name="Weber N."/>
            <person name="Vandenbol M."/>
            <person name="Bargues M."/>
            <person name="Terol J."/>
            <person name="Torres A."/>
            <person name="Perez-Perez A."/>
            <person name="Purnelle B."/>
            <person name="Bent E."/>
            <person name="Johnson S."/>
            <person name="Tacon D."/>
            <person name="Jesse T."/>
            <person name="Heijnen L."/>
            <person name="Schwarz S."/>
            <person name="Scholler P."/>
            <person name="Heber S."/>
            <person name="Francs P."/>
            <person name="Bielke C."/>
            <person name="Frishman D."/>
            <person name="Haase D."/>
            <person name="Lemcke K."/>
            <person name="Mewes H.-W."/>
            <person name="Stocker S."/>
            <person name="Zaccaria P."/>
            <person name="Bevan M."/>
            <person name="Wilson R.K."/>
            <person name="de la Bastide M."/>
            <person name="Habermann K."/>
            <person name="Parnell L."/>
            <person name="Dedhia N."/>
            <person name="Gnoj L."/>
            <person name="Schutz K."/>
            <person name="Huang E."/>
            <person name="Spiegel L."/>
            <person name="Sekhon M."/>
            <person name="Murray J."/>
            <person name="Sheet P."/>
            <person name="Cordes M."/>
            <person name="Abu-Threideh J."/>
            <person name="Stoneking T."/>
            <person name="Kalicki J."/>
            <person name="Graves T."/>
            <person name="Harmon G."/>
            <person name="Edwards J."/>
            <person name="Latreille P."/>
            <person name="Courtney L."/>
            <person name="Cloud J."/>
            <person name="Abbott A."/>
            <person name="Scott K."/>
            <person name="Johnson D."/>
            <person name="Minx P."/>
            <person name="Bentley D."/>
            <person name="Fulton B."/>
            <person name="Miller N."/>
            <person name="Greco T."/>
            <person name="Kemp K."/>
            <person name="Kramer J."/>
            <person name="Fulton L."/>
            <person name="Mardis E."/>
            <person name="Dante M."/>
            <person name="Pepin K."/>
            <person name="Hillier L.W."/>
            <person name="Nelson J."/>
            <person name="Spieth J."/>
            <person name="Ryan E."/>
            <person name="Andrews S."/>
            <person name="Geisel C."/>
            <person name="Layman D."/>
            <person name="Du H."/>
            <person name="Ali J."/>
            <person name="Berghoff A."/>
            <person name="Jones K."/>
            <person name="Drone K."/>
            <person name="Cotton M."/>
            <person name="Joshu C."/>
            <person name="Antonoiu B."/>
            <person name="Zidanic M."/>
            <person name="Strong C."/>
            <person name="Sun H."/>
            <person name="Lamar B."/>
            <person name="Yordan C."/>
            <person name="Ma P."/>
            <person name="Zhong J."/>
            <person name="Preston R."/>
            <person name="Vil D."/>
            <person name="Shekher M."/>
            <person name="Matero A."/>
            <person name="Shah R."/>
            <person name="Swaby I.K."/>
            <person name="O'Shaughnessy A."/>
            <person name="Rodriguez M."/>
            <person name="Hoffman J."/>
            <person name="Till S."/>
            <person name="Granat S."/>
            <person name="Shohdy N."/>
            <person name="Hasegawa A."/>
            <person name="Hameed A."/>
            <person name="Lodhi M."/>
            <person name="Johnson A."/>
            <person name="Chen E."/>
            <person name="Marra M.A."/>
            <person name="Martienssen R."/>
            <person name="McCombie W.R."/>
        </authorList>
    </citation>
    <scope>NUCLEOTIDE SEQUENCE [LARGE SCALE GENOMIC DNA]</scope>
    <source>
        <strain>cv. Columbia</strain>
    </source>
</reference>
<reference key="2">
    <citation type="journal article" date="2017" name="Plant J.">
        <title>Araport11: a complete reannotation of the Arabidopsis thaliana reference genome.</title>
        <authorList>
            <person name="Cheng C.Y."/>
            <person name="Krishnakumar V."/>
            <person name="Chan A.P."/>
            <person name="Thibaud-Nissen F."/>
            <person name="Schobel S."/>
            <person name="Town C.D."/>
        </authorList>
    </citation>
    <scope>GENOME REANNOTATION</scope>
    <source>
        <strain>cv. Columbia</strain>
    </source>
</reference>
<reference key="3">
    <citation type="journal article" date="2003" name="Science">
        <title>Empirical analysis of transcriptional activity in the Arabidopsis genome.</title>
        <authorList>
            <person name="Yamada K."/>
            <person name="Lim J."/>
            <person name="Dale J.M."/>
            <person name="Chen H."/>
            <person name="Shinn P."/>
            <person name="Palm C.J."/>
            <person name="Southwick A.M."/>
            <person name="Wu H.C."/>
            <person name="Kim C.J."/>
            <person name="Nguyen M."/>
            <person name="Pham P.K."/>
            <person name="Cheuk R.F."/>
            <person name="Karlin-Newmann G."/>
            <person name="Liu S.X."/>
            <person name="Lam B."/>
            <person name="Sakano H."/>
            <person name="Wu T."/>
            <person name="Yu G."/>
            <person name="Miranda M."/>
            <person name="Quach H.L."/>
            <person name="Tripp M."/>
            <person name="Chang C.H."/>
            <person name="Lee J.M."/>
            <person name="Toriumi M.J."/>
            <person name="Chan M.M."/>
            <person name="Tang C.C."/>
            <person name="Onodera C.S."/>
            <person name="Deng J.M."/>
            <person name="Akiyama K."/>
            <person name="Ansari Y."/>
            <person name="Arakawa T."/>
            <person name="Banh J."/>
            <person name="Banno F."/>
            <person name="Bowser L."/>
            <person name="Brooks S.Y."/>
            <person name="Carninci P."/>
            <person name="Chao Q."/>
            <person name="Choy N."/>
            <person name="Enju A."/>
            <person name="Goldsmith A.D."/>
            <person name="Gurjal M."/>
            <person name="Hansen N.F."/>
            <person name="Hayashizaki Y."/>
            <person name="Johnson-Hopson C."/>
            <person name="Hsuan V.W."/>
            <person name="Iida K."/>
            <person name="Karnes M."/>
            <person name="Khan S."/>
            <person name="Koesema E."/>
            <person name="Ishida J."/>
            <person name="Jiang P.X."/>
            <person name="Jones T."/>
            <person name="Kawai J."/>
            <person name="Kamiya A."/>
            <person name="Meyers C."/>
            <person name="Nakajima M."/>
            <person name="Narusaka M."/>
            <person name="Seki M."/>
            <person name="Sakurai T."/>
            <person name="Satou M."/>
            <person name="Tamse R."/>
            <person name="Vaysberg M."/>
            <person name="Wallender E.K."/>
            <person name="Wong C."/>
            <person name="Yamamura Y."/>
            <person name="Yuan S."/>
            <person name="Shinozaki K."/>
            <person name="Davis R.W."/>
            <person name="Theologis A."/>
            <person name="Ecker J.R."/>
        </authorList>
    </citation>
    <scope>NUCLEOTIDE SEQUENCE [LARGE SCALE MRNA]</scope>
    <source>
        <strain>cv. Columbia</strain>
    </source>
</reference>
<reference key="4">
    <citation type="journal article" date="2004" name="J. Mol. Evol.">
        <title>Phylogenetic analysis of the plant endo-beta-1,4-glucanase gene family.</title>
        <authorList>
            <person name="Libertini E."/>
            <person name="Li Y."/>
            <person name="McQueen-Mason S.J."/>
        </authorList>
    </citation>
    <scope>GENE FAMILY</scope>
</reference>
<accession>O81416</accession>
<name>GUN17_ARATH</name>
<proteinExistence type="evidence at transcript level"/>
<gene>
    <name type="ordered locus">At4g02290</name>
    <name type="ORF">T2H3.5</name>
</gene>
<evidence type="ECO:0000250" key="1"/>
<evidence type="ECO:0000255" key="2"/>
<evidence type="ECO:0000255" key="3">
    <source>
        <dbReference type="PROSITE-ProRule" id="PRU10059"/>
    </source>
</evidence>
<evidence type="ECO:0000255" key="4">
    <source>
        <dbReference type="PROSITE-ProRule" id="PRU10060"/>
    </source>
</evidence>
<evidence type="ECO:0000255" key="5">
    <source>
        <dbReference type="PROSITE-ProRule" id="PRU10140"/>
    </source>
</evidence>
<evidence type="ECO:0000305" key="6"/>
<feature type="signal peptide" evidence="2">
    <location>
        <begin position="1"/>
        <end position="29"/>
    </location>
</feature>
<feature type="chain" id="PRO_0000249269" description="Endoglucanase 17">
    <location>
        <begin position="30"/>
        <end position="516"/>
    </location>
</feature>
<feature type="active site" description="Nucleophile" evidence="5">
    <location>
        <position position="105"/>
    </location>
</feature>
<feature type="active site" evidence="3">
    <location>
        <position position="433"/>
    </location>
</feature>
<feature type="active site" evidence="4">
    <location>
        <position position="484"/>
    </location>
</feature>
<feature type="active site" evidence="4">
    <location>
        <position position="493"/>
    </location>
</feature>
<keyword id="KW-0119">Carbohydrate metabolism</keyword>
<keyword id="KW-0961">Cell wall biogenesis/degradation</keyword>
<keyword id="KW-0136">Cellulose degradation</keyword>
<keyword id="KW-0326">Glycosidase</keyword>
<keyword id="KW-0378">Hydrolase</keyword>
<keyword id="KW-0624">Polysaccharide degradation</keyword>
<keyword id="KW-1185">Reference proteome</keyword>
<keyword id="KW-0964">Secreted</keyword>
<keyword id="KW-0732">Signal</keyword>
<protein>
    <recommendedName>
        <fullName>Endoglucanase 17</fullName>
        <ecNumber>3.2.1.4</ecNumber>
    </recommendedName>
    <alternativeName>
        <fullName>Endo-1,4-beta glucanase 17</fullName>
    </alternativeName>
</protein>